<reference key="1">
    <citation type="submission" date="2004-05" db="EMBL/GenBank/DDBJ databases">
        <authorList>
            <consortium name="NIH - Xenopus Gene Collection (XGC) project"/>
        </authorList>
    </citation>
    <scope>NUCLEOTIDE SEQUENCE [LARGE SCALE MRNA]</scope>
    <source>
        <tissue>Oocyte</tissue>
    </source>
</reference>
<comment type="function">
    <text evidence="1">Key microtubule-organizing protein that specifically binds the minus-end of non-centrosomal microtubules and regulates their dynamics and organization. Specifically recognizes growing microtubule minus-ends and stabilizes microtubules. Acts on free microtubule minus-ends that are not capped by microtubule-nucleating proteins or other factors and protects microtubule minus-ends from depolymerization. In contrast to camsap2 and camsap3, tracks along the growing tips of minus-end microtubules without significantly affecting the polymerization rate: binds at the very tip of the microtubules minus-end and acts as a minus-end tracking protein (-TIP) that dissociates from microtubules after allowing tubulin incorporation. Through interaction with spectrin may regulate neurite outgrowth.</text>
</comment>
<comment type="subcellular location">
    <subcellularLocation>
        <location evidence="1">Cytoplasm</location>
        <location evidence="1">Cytoskeleton</location>
    </subcellularLocation>
    <text evidence="1">Associates with the minus-end of microtubules. In contrast to camsap2 and camsap3, does not form stretches of decorated microtubule minus-ends.</text>
</comment>
<comment type="domain">
    <text evidence="4">The CKK domain binds microtubules.</text>
</comment>
<comment type="similarity">
    <text evidence="4">Belongs to the CAMSAP1 family.</text>
</comment>
<evidence type="ECO:0000250" key="1">
    <source>
        <dbReference type="UniProtKB" id="Q5T5Y3"/>
    </source>
</evidence>
<evidence type="ECO:0000255" key="2"/>
<evidence type="ECO:0000255" key="3">
    <source>
        <dbReference type="PROSITE-ProRule" id="PRU00044"/>
    </source>
</evidence>
<evidence type="ECO:0000255" key="4">
    <source>
        <dbReference type="PROSITE-ProRule" id="PRU00841"/>
    </source>
</evidence>
<evidence type="ECO:0000256" key="5">
    <source>
        <dbReference type="SAM" id="MobiDB-lite"/>
    </source>
</evidence>
<name>CAMP1_XENLA</name>
<accession>Q6IRN6</accession>
<organism>
    <name type="scientific">Xenopus laevis</name>
    <name type="common">African clawed frog</name>
    <dbReference type="NCBI Taxonomy" id="8355"/>
    <lineage>
        <taxon>Eukaryota</taxon>
        <taxon>Metazoa</taxon>
        <taxon>Chordata</taxon>
        <taxon>Craniata</taxon>
        <taxon>Vertebrata</taxon>
        <taxon>Euteleostomi</taxon>
        <taxon>Amphibia</taxon>
        <taxon>Batrachia</taxon>
        <taxon>Anura</taxon>
        <taxon>Pipoidea</taxon>
        <taxon>Pipidae</taxon>
        <taxon>Xenopodinae</taxon>
        <taxon>Xenopus</taxon>
        <taxon>Xenopus</taxon>
    </lineage>
</organism>
<protein>
    <recommendedName>
        <fullName>Calmodulin-regulated spectrin-associated protein 1</fullName>
    </recommendedName>
</protein>
<dbReference type="EMBL" id="BC070721">
    <property type="protein sequence ID" value="AAH70721.1"/>
    <property type="molecule type" value="mRNA"/>
</dbReference>
<dbReference type="RefSeq" id="NP_001084957.1">
    <property type="nucleotide sequence ID" value="NM_001091488.1"/>
</dbReference>
<dbReference type="SMR" id="Q6IRN6"/>
<dbReference type="DNASU" id="432015"/>
<dbReference type="GeneID" id="432015"/>
<dbReference type="KEGG" id="xla:432015"/>
<dbReference type="AGR" id="Xenbase:XB-GENE-940444"/>
<dbReference type="CTD" id="432015"/>
<dbReference type="Xenbase" id="XB-GENE-940444">
    <property type="gene designation" value="camsap1.S"/>
</dbReference>
<dbReference type="OrthoDB" id="2125658at2759"/>
<dbReference type="Proteomes" id="UP000186698">
    <property type="component" value="Chromosome 8S"/>
</dbReference>
<dbReference type="Bgee" id="432015">
    <property type="expression patterns" value="Expressed in egg cell and 19 other cell types or tissues"/>
</dbReference>
<dbReference type="GO" id="GO:0005737">
    <property type="term" value="C:cytoplasm"/>
    <property type="evidence" value="ECO:0007669"/>
    <property type="project" value="UniProtKB-KW"/>
</dbReference>
<dbReference type="GO" id="GO:0005874">
    <property type="term" value="C:microtubule"/>
    <property type="evidence" value="ECO:0000250"/>
    <property type="project" value="UniProtKB"/>
</dbReference>
<dbReference type="GO" id="GO:0036449">
    <property type="term" value="C:microtubule minus-end"/>
    <property type="evidence" value="ECO:0007669"/>
    <property type="project" value="TreeGrafter"/>
</dbReference>
<dbReference type="GO" id="GO:0005516">
    <property type="term" value="F:calmodulin binding"/>
    <property type="evidence" value="ECO:0007669"/>
    <property type="project" value="InterPro"/>
</dbReference>
<dbReference type="GO" id="GO:0008017">
    <property type="term" value="F:microtubule binding"/>
    <property type="evidence" value="ECO:0000250"/>
    <property type="project" value="UniProtKB"/>
</dbReference>
<dbReference type="GO" id="GO:0051011">
    <property type="term" value="F:microtubule minus-end binding"/>
    <property type="evidence" value="ECO:0000250"/>
    <property type="project" value="UniProtKB"/>
</dbReference>
<dbReference type="GO" id="GO:0030507">
    <property type="term" value="F:spectrin binding"/>
    <property type="evidence" value="ECO:0007669"/>
    <property type="project" value="InterPro"/>
</dbReference>
<dbReference type="GO" id="GO:0031122">
    <property type="term" value="P:cytoplasmic microtubule organization"/>
    <property type="evidence" value="ECO:0000318"/>
    <property type="project" value="GO_Central"/>
</dbReference>
<dbReference type="GO" id="GO:0007010">
    <property type="term" value="P:cytoskeleton organization"/>
    <property type="evidence" value="ECO:0000250"/>
    <property type="project" value="UniProtKB"/>
</dbReference>
<dbReference type="GO" id="GO:0000226">
    <property type="term" value="P:microtubule cytoskeleton organization"/>
    <property type="evidence" value="ECO:0000250"/>
    <property type="project" value="UniProtKB"/>
</dbReference>
<dbReference type="GO" id="GO:0007026">
    <property type="term" value="P:negative regulation of microtubule depolymerization"/>
    <property type="evidence" value="ECO:0000318"/>
    <property type="project" value="GO_Central"/>
</dbReference>
<dbReference type="GO" id="GO:0031175">
    <property type="term" value="P:neuron projection development"/>
    <property type="evidence" value="ECO:0000250"/>
    <property type="project" value="UniProtKB"/>
</dbReference>
<dbReference type="GO" id="GO:0022604">
    <property type="term" value="P:regulation of cell morphogenesis"/>
    <property type="evidence" value="ECO:0000250"/>
    <property type="project" value="UniProtKB"/>
</dbReference>
<dbReference type="GO" id="GO:0031113">
    <property type="term" value="P:regulation of microtubule polymerization"/>
    <property type="evidence" value="ECO:0000250"/>
    <property type="project" value="UniProtKB"/>
</dbReference>
<dbReference type="CDD" id="cd22265">
    <property type="entry name" value="UDM1_RNF168"/>
    <property type="match status" value="1"/>
</dbReference>
<dbReference type="FunFam" id="3.10.20.360:FF:000001">
    <property type="entry name" value="Calmodulin-regulated spectrin-associated protein 3 isoform 2"/>
    <property type="match status" value="1"/>
</dbReference>
<dbReference type="Gene3D" id="1.10.418.10">
    <property type="entry name" value="Calponin-like domain"/>
    <property type="match status" value="1"/>
</dbReference>
<dbReference type="Gene3D" id="3.10.20.360">
    <property type="entry name" value="CKK domain"/>
    <property type="match status" value="1"/>
</dbReference>
<dbReference type="InterPro" id="IPR032940">
    <property type="entry name" value="CAMSAP"/>
</dbReference>
<dbReference type="InterPro" id="IPR022613">
    <property type="entry name" value="CAMSAP-like_CH_dom"/>
</dbReference>
<dbReference type="InterPro" id="IPR031372">
    <property type="entry name" value="CAMSAP_CC1"/>
</dbReference>
<dbReference type="InterPro" id="IPR001715">
    <property type="entry name" value="CH_dom"/>
</dbReference>
<dbReference type="InterPro" id="IPR036872">
    <property type="entry name" value="CH_dom_sf"/>
</dbReference>
<dbReference type="InterPro" id="IPR038209">
    <property type="entry name" value="CKK_dom_sf"/>
</dbReference>
<dbReference type="InterPro" id="IPR014797">
    <property type="entry name" value="CKK_domain"/>
</dbReference>
<dbReference type="InterPro" id="IPR011033">
    <property type="entry name" value="PRC_barrel-like_sf"/>
</dbReference>
<dbReference type="PANTHER" id="PTHR21595:SF3">
    <property type="entry name" value="CALMODULIN-REGULATED SPECTRIN-ASSOCIATED PROTEIN 1"/>
    <property type="match status" value="1"/>
</dbReference>
<dbReference type="PANTHER" id="PTHR21595">
    <property type="entry name" value="PATRONIN"/>
    <property type="match status" value="1"/>
</dbReference>
<dbReference type="Pfam" id="PF17095">
    <property type="entry name" value="CAMSAP_CC1"/>
    <property type="match status" value="1"/>
</dbReference>
<dbReference type="Pfam" id="PF11971">
    <property type="entry name" value="CAMSAP_CH"/>
    <property type="match status" value="1"/>
</dbReference>
<dbReference type="Pfam" id="PF08683">
    <property type="entry name" value="CAMSAP_CKK"/>
    <property type="match status" value="1"/>
</dbReference>
<dbReference type="SMART" id="SM01051">
    <property type="entry name" value="CAMSAP_CKK"/>
    <property type="match status" value="1"/>
</dbReference>
<dbReference type="SUPFAM" id="SSF47576">
    <property type="entry name" value="Calponin-homology domain, CH-domain"/>
    <property type="match status" value="1"/>
</dbReference>
<dbReference type="SUPFAM" id="SSF50346">
    <property type="entry name" value="PRC-barrel domain"/>
    <property type="match status" value="1"/>
</dbReference>
<dbReference type="PROSITE" id="PS50021">
    <property type="entry name" value="CH"/>
    <property type="match status" value="1"/>
</dbReference>
<dbReference type="PROSITE" id="PS51508">
    <property type="entry name" value="CKK"/>
    <property type="match status" value="1"/>
</dbReference>
<feature type="chain" id="PRO_0000316831" description="Calmodulin-regulated spectrin-associated protein 1">
    <location>
        <begin position="1"/>
        <end position="1576"/>
    </location>
</feature>
<feature type="domain" description="Calponin-homology (CH)" evidence="3">
    <location>
        <begin position="217"/>
        <end position="332"/>
    </location>
</feature>
<feature type="domain" description="CKK" evidence="4">
    <location>
        <begin position="1437"/>
        <end position="1571"/>
    </location>
</feature>
<feature type="region of interest" description="Disordered" evidence="5">
    <location>
        <begin position="415"/>
        <end position="447"/>
    </location>
</feature>
<feature type="region of interest" description="Disordered" evidence="5">
    <location>
        <begin position="549"/>
        <end position="572"/>
    </location>
</feature>
<feature type="region of interest" description="Disordered" evidence="5">
    <location>
        <begin position="595"/>
        <end position="653"/>
    </location>
</feature>
<feature type="region of interest" description="Disordered" evidence="5">
    <location>
        <begin position="811"/>
        <end position="852"/>
    </location>
</feature>
<feature type="region of interest" description="Disordered" evidence="5">
    <location>
        <begin position="1108"/>
        <end position="1149"/>
    </location>
</feature>
<feature type="region of interest" description="Disordered" evidence="5">
    <location>
        <begin position="1178"/>
        <end position="1236"/>
    </location>
</feature>
<feature type="region of interest" description="Disordered" evidence="5">
    <location>
        <begin position="1274"/>
        <end position="1422"/>
    </location>
</feature>
<feature type="coiled-coil region" evidence="2">
    <location>
        <begin position="857"/>
        <end position="889"/>
    </location>
</feature>
<feature type="coiled-coil region" evidence="2">
    <location>
        <begin position="992"/>
        <end position="1022"/>
    </location>
</feature>
<feature type="coiled-coil region" evidence="2">
    <location>
        <begin position="1254"/>
        <end position="1315"/>
    </location>
</feature>
<feature type="compositionally biased region" description="Basic and acidic residues" evidence="5">
    <location>
        <begin position="428"/>
        <end position="439"/>
    </location>
</feature>
<feature type="compositionally biased region" description="Low complexity" evidence="5">
    <location>
        <begin position="554"/>
        <end position="566"/>
    </location>
</feature>
<feature type="compositionally biased region" description="Basic and acidic residues" evidence="5">
    <location>
        <begin position="595"/>
        <end position="611"/>
    </location>
</feature>
<feature type="compositionally biased region" description="Polar residues" evidence="5">
    <location>
        <begin position="613"/>
        <end position="626"/>
    </location>
</feature>
<feature type="compositionally biased region" description="Polar residues" evidence="5">
    <location>
        <begin position="642"/>
        <end position="651"/>
    </location>
</feature>
<feature type="compositionally biased region" description="Low complexity" evidence="5">
    <location>
        <begin position="813"/>
        <end position="824"/>
    </location>
</feature>
<feature type="compositionally biased region" description="Basic and acidic residues" evidence="5">
    <location>
        <begin position="840"/>
        <end position="852"/>
    </location>
</feature>
<feature type="compositionally biased region" description="Low complexity" evidence="5">
    <location>
        <begin position="1116"/>
        <end position="1131"/>
    </location>
</feature>
<feature type="compositionally biased region" description="Polar residues" evidence="5">
    <location>
        <begin position="1178"/>
        <end position="1189"/>
    </location>
</feature>
<feature type="compositionally biased region" description="Basic and acidic residues" evidence="5">
    <location>
        <begin position="1195"/>
        <end position="1204"/>
    </location>
</feature>
<feature type="compositionally biased region" description="Basic and acidic residues" evidence="5">
    <location>
        <begin position="1225"/>
        <end position="1236"/>
    </location>
</feature>
<feature type="compositionally biased region" description="Basic and acidic residues" evidence="5">
    <location>
        <begin position="1274"/>
        <end position="1323"/>
    </location>
</feature>
<feature type="compositionally biased region" description="Basic residues" evidence="5">
    <location>
        <begin position="1333"/>
        <end position="1346"/>
    </location>
</feature>
<feature type="compositionally biased region" description="Polar residues" evidence="5">
    <location>
        <begin position="1354"/>
        <end position="1366"/>
    </location>
</feature>
<feature type="compositionally biased region" description="Low complexity" evidence="5">
    <location>
        <begin position="1367"/>
        <end position="1382"/>
    </location>
</feature>
<feature type="compositionally biased region" description="Polar residues" evidence="5">
    <location>
        <begin position="1383"/>
        <end position="1394"/>
    </location>
</feature>
<gene>
    <name type="primary">camsap1</name>
</gene>
<proteinExistence type="evidence at transcript level"/>
<keyword id="KW-0175">Coiled coil</keyword>
<keyword id="KW-0963">Cytoplasm</keyword>
<keyword id="KW-0206">Cytoskeleton</keyword>
<keyword id="KW-0493">Microtubule</keyword>
<keyword id="KW-1185">Reference proteome</keyword>
<sequence length="1576" mass="175934">MVDIGLSASGDSTRRKMEAFADCAVEVVPLDLYDSFRAKIAANLQWICAKAYGIDNVPEELKDPFYTDQYEQEHIKPPVIKLLLSSELYCRVCSLILKGDQVAALQGHQPVIQALSRKGIYIMESDDAPVSESDLSCCPIKMSAHMSMIDALMMAYTVEMISIEKVVASVKRFSTFSASKELPYDLEDAMVFWINKVNLKMREILEREQRIKQQVIESPSHPKVRYRRDHPSSRHLPYFPILEDLTKDISDGAALLAVIHFYCPEQMKLDDICLKEVTSMADSVYNIQLLKEFSNEYLNKCFYLTLEDMLYTPLVLKPNIMVFIAELFWWFENVKPEFVHPRDTQELKEAKIVMHPKTSRPQVPISNATKRSFLASPGSTTDSQATAASESCSSNYLQAEDAENGKGCAVFSPSHPLLPLRQKQQKSVKPEESLNHRDQANSLTRADGQPMASIIAWKEKKPRPLSQTFALHHAADDVESTSGDSISLARSISKDSLASNIVNPTPKHQSYPTPIKVLPKSLLGNVDIEDDEEELVAFIRSDDASCPGDLELQSVSSRASSQMSTSRLRRPADLESKPDSFFLEPLMPAVLKPAKEKHMVPKSEEYGEGKQKGFSSKRQNEGNQSFSRKKIINNHTGHDLNRTFTPLSSLESDPLRTDPVQLSIESGNGNFRPLATSSVESSEHGGGFFLHDLNADDDVEDKPSAGNLIMEDPHKPDTTWTVLRPGSENLDVGGCEEVAVSRPVGKYIGEEESVKLQEDLKLKEHDDKDDASGRSSPCLSTISQISSASMASGSMRMTSFAERKFQKLNSYETKSSTSSSQKTTPDGSECCPPPLTTWKQRREQSPGRQNRDHANVLASELVQLHMQLEEKRRVIEAQKKKMESLSARQRLKLGKAAFLHVVKKGKPETVAQPVKPEHGFRDYTKRTPEDIDTVSVNAKVEQYLESIDPGIVSSEVQEAFTDPKLKDPALLEADICNLMADANPEDIDSEIDVNECDLSIEKLNETISTLQQAIMKISQQQEMLMKAPSMAVPPLPSSSQDHKLKPSVQFVEPISPPGMPIVRKTTRFGQGRNARSLRVTEQKLAKEKMQSSSRVITPTNSIETVPHLKSVQPLKSPSVPTEESPVEVVPEQGSASQDKPTTGGFRLHNDNSQRTFVLSTSKDANIISEQMHREVISSSRVAGVSTSESSGKENVPVDERHKSSLIEVDLSDLKEPDEGEEESDHPEKTKDIISDDQKSGVGFFFKDEQKAEDELAKKRAAFLMKQQRKAEEARLRKRQLEAEVEQKRDDARRKAEEDRIRKDEEKARRELIKQEYLRRKQEQILEEQGLGRPKPKPKSKKTRPKSVHREESYSDSGTKYSSTPDNLSSAQSGSSLSLASGATTEAESVHSGGTPSHRVDCVDAPSGMGRHQSRNAERDWENASTASSIASVAEYSGPKLYKEPSSKSNKPLIHNAISHCCLAGKVNEAIKNSTLDELEKCDSNHYIILFRDAGCQFRALYSYYPETEEICKLTGTGPKNITKKMIDKLYKYSSDRKQFTVIPAKTMSASVDALTIHNHLWQAKRPALPKKNSLGK</sequence>